<organism>
    <name type="scientific">Yersinia pestis (strain Pestoides F)</name>
    <dbReference type="NCBI Taxonomy" id="386656"/>
    <lineage>
        <taxon>Bacteria</taxon>
        <taxon>Pseudomonadati</taxon>
        <taxon>Pseudomonadota</taxon>
        <taxon>Gammaproteobacteria</taxon>
        <taxon>Enterobacterales</taxon>
        <taxon>Yersiniaceae</taxon>
        <taxon>Yersinia</taxon>
    </lineage>
</organism>
<evidence type="ECO:0000255" key="1">
    <source>
        <dbReference type="HAMAP-Rule" id="MF_01008"/>
    </source>
</evidence>
<evidence type="ECO:0000255" key="2">
    <source>
        <dbReference type="PROSITE-ProRule" id="PRU01076"/>
    </source>
</evidence>
<name>MRAZ_YERPP</name>
<reference key="1">
    <citation type="submission" date="2007-02" db="EMBL/GenBank/DDBJ databases">
        <title>Complete sequence of chromosome of Yersinia pestis Pestoides F.</title>
        <authorList>
            <consortium name="US DOE Joint Genome Institute"/>
            <person name="Copeland A."/>
            <person name="Lucas S."/>
            <person name="Lapidus A."/>
            <person name="Barry K."/>
            <person name="Detter J.C."/>
            <person name="Glavina del Rio T."/>
            <person name="Hammon N."/>
            <person name="Israni S."/>
            <person name="Dalin E."/>
            <person name="Tice H."/>
            <person name="Pitluck S."/>
            <person name="Di Bartolo G."/>
            <person name="Chain P."/>
            <person name="Malfatti S."/>
            <person name="Shin M."/>
            <person name="Vergez L."/>
            <person name="Schmutz J."/>
            <person name="Larimer F."/>
            <person name="Land M."/>
            <person name="Hauser L."/>
            <person name="Worsham P."/>
            <person name="Chu M."/>
            <person name="Bearden S."/>
            <person name="Garcia E."/>
            <person name="Richardson P."/>
        </authorList>
    </citation>
    <scope>NUCLEOTIDE SEQUENCE [LARGE SCALE GENOMIC DNA]</scope>
    <source>
        <strain>Pestoides F</strain>
    </source>
</reference>
<protein>
    <recommendedName>
        <fullName>Transcriptional regulator MraZ</fullName>
    </recommendedName>
</protein>
<gene>
    <name evidence="1" type="primary">mraZ</name>
    <name type="ordered locus">YPDSF_3096</name>
</gene>
<accession>A4TQ92</accession>
<proteinExistence type="inferred from homology"/>
<feature type="chain" id="PRO_1000062952" description="Transcriptional regulator MraZ">
    <location>
        <begin position="1"/>
        <end position="152"/>
    </location>
</feature>
<feature type="domain" description="SpoVT-AbrB 1" evidence="2">
    <location>
        <begin position="5"/>
        <end position="52"/>
    </location>
</feature>
<feature type="domain" description="SpoVT-AbrB 2" evidence="2">
    <location>
        <begin position="81"/>
        <end position="124"/>
    </location>
</feature>
<dbReference type="EMBL" id="CP000668">
    <property type="protein sequence ID" value="ABP41454.1"/>
    <property type="molecule type" value="Genomic_DNA"/>
</dbReference>
<dbReference type="RefSeq" id="WP_002210443.1">
    <property type="nucleotide sequence ID" value="NZ_CP009715.1"/>
</dbReference>
<dbReference type="SMR" id="A4TQ92"/>
<dbReference type="GeneID" id="57974069"/>
<dbReference type="KEGG" id="ypp:YPDSF_3096"/>
<dbReference type="PATRIC" id="fig|386656.14.peg.1264"/>
<dbReference type="GO" id="GO:0005737">
    <property type="term" value="C:cytoplasm"/>
    <property type="evidence" value="ECO:0007669"/>
    <property type="project" value="UniProtKB-UniRule"/>
</dbReference>
<dbReference type="GO" id="GO:0009295">
    <property type="term" value="C:nucleoid"/>
    <property type="evidence" value="ECO:0007669"/>
    <property type="project" value="UniProtKB-SubCell"/>
</dbReference>
<dbReference type="GO" id="GO:0003700">
    <property type="term" value="F:DNA-binding transcription factor activity"/>
    <property type="evidence" value="ECO:0007669"/>
    <property type="project" value="UniProtKB-UniRule"/>
</dbReference>
<dbReference type="GO" id="GO:0000976">
    <property type="term" value="F:transcription cis-regulatory region binding"/>
    <property type="evidence" value="ECO:0007669"/>
    <property type="project" value="TreeGrafter"/>
</dbReference>
<dbReference type="GO" id="GO:2000143">
    <property type="term" value="P:negative regulation of DNA-templated transcription initiation"/>
    <property type="evidence" value="ECO:0007669"/>
    <property type="project" value="TreeGrafter"/>
</dbReference>
<dbReference type="CDD" id="cd16321">
    <property type="entry name" value="MraZ_C"/>
    <property type="match status" value="1"/>
</dbReference>
<dbReference type="CDD" id="cd16320">
    <property type="entry name" value="MraZ_N"/>
    <property type="match status" value="1"/>
</dbReference>
<dbReference type="FunFam" id="3.40.1550.20:FF:000001">
    <property type="entry name" value="Transcriptional regulator MraZ"/>
    <property type="match status" value="1"/>
</dbReference>
<dbReference type="Gene3D" id="3.40.1550.20">
    <property type="entry name" value="Transcriptional regulator MraZ domain"/>
    <property type="match status" value="1"/>
</dbReference>
<dbReference type="HAMAP" id="MF_01008">
    <property type="entry name" value="MraZ"/>
    <property type="match status" value="1"/>
</dbReference>
<dbReference type="InterPro" id="IPR003444">
    <property type="entry name" value="MraZ"/>
</dbReference>
<dbReference type="InterPro" id="IPR035644">
    <property type="entry name" value="MraZ_C"/>
</dbReference>
<dbReference type="InterPro" id="IPR020603">
    <property type="entry name" value="MraZ_dom"/>
</dbReference>
<dbReference type="InterPro" id="IPR035642">
    <property type="entry name" value="MraZ_N"/>
</dbReference>
<dbReference type="InterPro" id="IPR038619">
    <property type="entry name" value="MraZ_sf"/>
</dbReference>
<dbReference type="InterPro" id="IPR007159">
    <property type="entry name" value="SpoVT-AbrB_dom"/>
</dbReference>
<dbReference type="InterPro" id="IPR037914">
    <property type="entry name" value="SpoVT-AbrB_sf"/>
</dbReference>
<dbReference type="NCBIfam" id="TIGR00242">
    <property type="entry name" value="division/cell wall cluster transcriptional repressor MraZ"/>
    <property type="match status" value="1"/>
</dbReference>
<dbReference type="PANTHER" id="PTHR34701">
    <property type="entry name" value="TRANSCRIPTIONAL REGULATOR MRAZ"/>
    <property type="match status" value="1"/>
</dbReference>
<dbReference type="PANTHER" id="PTHR34701:SF1">
    <property type="entry name" value="TRANSCRIPTIONAL REGULATOR MRAZ"/>
    <property type="match status" value="1"/>
</dbReference>
<dbReference type="Pfam" id="PF02381">
    <property type="entry name" value="MraZ"/>
    <property type="match status" value="2"/>
</dbReference>
<dbReference type="SUPFAM" id="SSF89447">
    <property type="entry name" value="AbrB/MazE/MraZ-like"/>
    <property type="match status" value="1"/>
</dbReference>
<dbReference type="PROSITE" id="PS51740">
    <property type="entry name" value="SPOVT_ABRB"/>
    <property type="match status" value="2"/>
</dbReference>
<sequence>MFRGATMVNLDSKGRLAVPTRYRESLNEESQGQMVCTIDLHQPCLLLYPLPEWEIIEQKLSRLSSMNPAERRVQRLLLGHASECQMDGAGRLLIAGTLRQHAGLNKEVMLVGQFNKFELWDEQTWYQQVKDDIDAEQSTQEPLSERLQGLSL</sequence>
<comment type="function">
    <text evidence="1">Negatively regulates its own expression and that of the subsequent genes in the proximal part of the division and cell wall (dcw) gene cluster. Acts by binding directly to DNA. May also regulate the expression of genes outside the dcw cluster.</text>
</comment>
<comment type="subunit">
    <text evidence="1">Forms oligomers.</text>
</comment>
<comment type="subcellular location">
    <subcellularLocation>
        <location evidence="1">Cytoplasm</location>
        <location evidence="1">Nucleoid</location>
    </subcellularLocation>
</comment>
<comment type="similarity">
    <text evidence="1">Belongs to the MraZ family.</text>
</comment>
<keyword id="KW-0963">Cytoplasm</keyword>
<keyword id="KW-0238">DNA-binding</keyword>
<keyword id="KW-0677">Repeat</keyword>
<keyword id="KW-0678">Repressor</keyword>
<keyword id="KW-0804">Transcription</keyword>
<keyword id="KW-0805">Transcription regulation</keyword>